<protein>
    <recommendedName>
        <fullName evidence="2 3">16S rRNA aminocarboxypropyltransferase</fullName>
        <ecNumber evidence="2">2.5.1.157</ecNumber>
    </recommendedName>
</protein>
<reference key="1">
    <citation type="journal article" date="2009" name="Proc. Natl. Acad. Sci. U.S.A.">
        <title>Biogeography of the Sulfolobus islandicus pan-genome.</title>
        <authorList>
            <person name="Reno M.L."/>
            <person name="Held N.L."/>
            <person name="Fields C.J."/>
            <person name="Burke P.V."/>
            <person name="Whitaker R.J."/>
        </authorList>
    </citation>
    <scope>NUCLEOTIDE SEQUENCE [LARGE SCALE GENOMIC DNA]</scope>
    <source>
        <strain>Y.G.57.14 / Yellowstone #1</strain>
    </source>
</reference>
<name>TSR3_SACI7</name>
<comment type="function">
    <text evidence="2">Aminocarboxypropyltransferase that catalyzes the aminocarboxypropyl transfer on pseudouridine corresponding to position 914 in M.jannaschii 16S rRNA. It constitutes the last step in biosynthesis of the hypermodified N1-methyl-N3-(3-amino-3-carboxypropyl) pseudouridine (m1acp3-Psi).</text>
</comment>
<comment type="catalytic activity">
    <reaction evidence="2">
        <text>an N(1)-methylpseudouridine in rRNA + S-adenosyl-L-methionine = N(1)-methyl-N(3)-[(3S)-3-amino-3-carboxypropyl]pseudouridine in rRNA + S-methyl-5'-thioadenosine + H(+)</text>
        <dbReference type="Rhea" id="RHEA:63296"/>
        <dbReference type="Rhea" id="RHEA-COMP:11634"/>
        <dbReference type="Rhea" id="RHEA-COMP:16310"/>
        <dbReference type="ChEBI" id="CHEBI:15378"/>
        <dbReference type="ChEBI" id="CHEBI:17509"/>
        <dbReference type="ChEBI" id="CHEBI:59789"/>
        <dbReference type="ChEBI" id="CHEBI:74890"/>
        <dbReference type="ChEBI" id="CHEBI:146234"/>
        <dbReference type="EC" id="2.5.1.157"/>
    </reaction>
</comment>
<comment type="subcellular location">
    <subcellularLocation>
        <location evidence="2">Cytoplasm</location>
    </subcellularLocation>
</comment>
<comment type="similarity">
    <text evidence="2">Belongs to the TDD superfamily. TSR3 family.</text>
</comment>
<feature type="chain" id="PRO_1000213604" description="16S rRNA aminocarboxypropyltransferase">
    <location>
        <begin position="1"/>
        <end position="166"/>
    </location>
</feature>
<feature type="binding site" evidence="1 2">
    <location>
        <position position="17"/>
    </location>
    <ligand>
        <name>S-adenosyl-L-methionine</name>
        <dbReference type="ChEBI" id="CHEBI:59789"/>
    </ligand>
</feature>
<feature type="binding site" evidence="1 2">
    <location>
        <position position="62"/>
    </location>
    <ligand>
        <name>S-adenosyl-L-methionine</name>
        <dbReference type="ChEBI" id="CHEBI:59789"/>
    </ligand>
</feature>
<feature type="binding site" evidence="1 2">
    <location>
        <position position="84"/>
    </location>
    <ligand>
        <name>S-adenosyl-L-methionine</name>
        <dbReference type="ChEBI" id="CHEBI:59789"/>
    </ligand>
</feature>
<feature type="binding site" evidence="1 2">
    <location>
        <position position="99"/>
    </location>
    <ligand>
        <name>S-adenosyl-L-methionine</name>
        <dbReference type="ChEBI" id="CHEBI:59789"/>
    </ligand>
</feature>
<feature type="binding site" evidence="2">
    <location>
        <position position="103"/>
    </location>
    <ligand>
        <name>S-adenosyl-L-methionine</name>
        <dbReference type="ChEBI" id="CHEBI:59789"/>
    </ligand>
</feature>
<gene>
    <name type="ordered locus">YG5714_1581</name>
</gene>
<keyword id="KW-0963">Cytoplasm</keyword>
<keyword id="KW-0690">Ribosome biogenesis</keyword>
<keyword id="KW-0698">rRNA processing</keyword>
<keyword id="KW-0949">S-adenosyl-L-methionine</keyword>
<keyword id="KW-0808">Transferase</keyword>
<sequence length="166" mass="19314">MKVYVIDYHKDDPKKCTGRKLVKLKLAELTRVGRGIILNPFSERTLSINDKDILIKSGITIIDTSWNNTSQNEFKNVRGEHRRLPILFAGNPIHYGIAYKLSSLEALMATLYILDEVKEAIKFSNVVKWGHTFIELNKELLEAYRNKDEEEIKKIEKEIIEKILRK</sequence>
<proteinExistence type="inferred from homology"/>
<dbReference type="EC" id="2.5.1.157" evidence="2"/>
<dbReference type="EMBL" id="CP001403">
    <property type="protein sequence ID" value="ACP45843.1"/>
    <property type="molecule type" value="Genomic_DNA"/>
</dbReference>
<dbReference type="RefSeq" id="WP_012711570.1">
    <property type="nucleotide sequence ID" value="NC_012622.1"/>
</dbReference>
<dbReference type="SMR" id="C3NEV4"/>
<dbReference type="KEGG" id="siy:YG5714_1581"/>
<dbReference type="HOGENOM" id="CLU_035060_4_1_2"/>
<dbReference type="Proteomes" id="UP000002308">
    <property type="component" value="Chromosome"/>
</dbReference>
<dbReference type="GO" id="GO:0005737">
    <property type="term" value="C:cytoplasm"/>
    <property type="evidence" value="ECO:0007669"/>
    <property type="project" value="UniProtKB-SubCell"/>
</dbReference>
<dbReference type="GO" id="GO:0106388">
    <property type="term" value="F:18S rRNA aminocarboxypropyltransferase activity"/>
    <property type="evidence" value="ECO:0007669"/>
    <property type="project" value="InterPro"/>
</dbReference>
<dbReference type="GO" id="GO:1904047">
    <property type="term" value="F:S-adenosyl-L-methionine binding"/>
    <property type="evidence" value="ECO:0007669"/>
    <property type="project" value="UniProtKB-UniRule"/>
</dbReference>
<dbReference type="GO" id="GO:0000455">
    <property type="term" value="P:enzyme-directed rRNA pseudouridine synthesis"/>
    <property type="evidence" value="ECO:0007669"/>
    <property type="project" value="UniProtKB-UniRule"/>
</dbReference>
<dbReference type="HAMAP" id="MF_01116">
    <property type="entry name" value="TSR3"/>
    <property type="match status" value="1"/>
</dbReference>
<dbReference type="InterPro" id="IPR007209">
    <property type="entry name" value="RNaseL-inhib-like_metal-bd_dom"/>
</dbReference>
<dbReference type="InterPro" id="IPR022968">
    <property type="entry name" value="Tsr3-like"/>
</dbReference>
<dbReference type="InterPro" id="IPR007177">
    <property type="entry name" value="Tsr3_C"/>
</dbReference>
<dbReference type="NCBIfam" id="NF002621">
    <property type="entry name" value="PRK02287.1"/>
    <property type="match status" value="1"/>
</dbReference>
<dbReference type="PANTHER" id="PTHR20426:SF0">
    <property type="entry name" value="18S RRNA AMINOCARBOXYPROPYLTRANSFERASE"/>
    <property type="match status" value="1"/>
</dbReference>
<dbReference type="PANTHER" id="PTHR20426">
    <property type="entry name" value="RIBOSOME BIOGENESIS PROTEIN TSR3 HOMOLOG"/>
    <property type="match status" value="1"/>
</dbReference>
<dbReference type="Pfam" id="PF04068">
    <property type="entry name" value="Fer4_RLI"/>
    <property type="match status" value="1"/>
</dbReference>
<dbReference type="Pfam" id="PF04034">
    <property type="entry name" value="Ribo_biogen_C"/>
    <property type="match status" value="1"/>
</dbReference>
<evidence type="ECO:0000250" key="1">
    <source>
        <dbReference type="UniProtKB" id="E1QU22"/>
    </source>
</evidence>
<evidence type="ECO:0000255" key="2">
    <source>
        <dbReference type="HAMAP-Rule" id="MF_01116"/>
    </source>
</evidence>
<evidence type="ECO:0000305" key="3"/>
<organism>
    <name type="scientific">Saccharolobus islandicus (strain Y.G.57.14 / Yellowstone #1)</name>
    <name type="common">Sulfolobus islandicus</name>
    <dbReference type="NCBI Taxonomy" id="439386"/>
    <lineage>
        <taxon>Archaea</taxon>
        <taxon>Thermoproteota</taxon>
        <taxon>Thermoprotei</taxon>
        <taxon>Sulfolobales</taxon>
        <taxon>Sulfolobaceae</taxon>
        <taxon>Saccharolobus</taxon>
    </lineage>
</organism>
<accession>C3NEV4</accession>